<protein>
    <recommendedName>
        <fullName evidence="1">Endoribonuclease YbeY</fullName>
        <ecNumber evidence="1">3.1.-.-</ecNumber>
    </recommendedName>
</protein>
<gene>
    <name evidence="1" type="primary">ybeY</name>
    <name type="ordered locus">YPO2618</name>
    <name type="ordered locus">y1193</name>
    <name type="ordered locus">YP_1095</name>
</gene>
<comment type="function">
    <text evidence="1">Single strand-specific metallo-endoribonuclease involved in late-stage 70S ribosome quality control and in maturation of the 3' terminus of the 16S rRNA.</text>
</comment>
<comment type="cofactor">
    <cofactor evidence="1">
        <name>Zn(2+)</name>
        <dbReference type="ChEBI" id="CHEBI:29105"/>
    </cofactor>
    <text evidence="1">Binds 1 zinc ion.</text>
</comment>
<comment type="subcellular location">
    <subcellularLocation>
        <location evidence="1">Cytoplasm</location>
    </subcellularLocation>
</comment>
<comment type="similarity">
    <text evidence="1">Belongs to the endoribonuclease YbeY family.</text>
</comment>
<sequence>MSQVILDLQIACADSQGLPTEGDFQRWLEAVLPLFQPVSEVTIRLVDEAESHDLNLTYRGKDKSTNVLSFPFEAPPEIELPLLGDLIICRQVVEKEAIEQEKALLAHWAHMVVHGSLHLLGYDHIDDEEAEEMELIETEIMHGLGYPDPYISEKDPD</sequence>
<keyword id="KW-0963">Cytoplasm</keyword>
<keyword id="KW-0255">Endonuclease</keyword>
<keyword id="KW-0378">Hydrolase</keyword>
<keyword id="KW-0479">Metal-binding</keyword>
<keyword id="KW-0540">Nuclease</keyword>
<keyword id="KW-1185">Reference proteome</keyword>
<keyword id="KW-0690">Ribosome biogenesis</keyword>
<keyword id="KW-0698">rRNA processing</keyword>
<keyword id="KW-0862">Zinc</keyword>
<name>YBEY_YERPE</name>
<accession>Q8ZDF0</accession>
<accession>Q0WDR4</accession>
<dbReference type="EC" id="3.1.-.-" evidence="1"/>
<dbReference type="EMBL" id="AL590842">
    <property type="protein sequence ID" value="CAL21241.1"/>
    <property type="molecule type" value="Genomic_DNA"/>
</dbReference>
<dbReference type="EMBL" id="AE009952">
    <property type="protein sequence ID" value="AAM84770.1"/>
    <property type="molecule type" value="Genomic_DNA"/>
</dbReference>
<dbReference type="EMBL" id="AE017042">
    <property type="protein sequence ID" value="AAS61341.1"/>
    <property type="molecule type" value="Genomic_DNA"/>
</dbReference>
<dbReference type="PIR" id="AF0319">
    <property type="entry name" value="AF0319"/>
</dbReference>
<dbReference type="RefSeq" id="WP_002210344.1">
    <property type="nucleotide sequence ID" value="NZ_WUCM01000011.1"/>
</dbReference>
<dbReference type="RefSeq" id="YP_002347574.1">
    <property type="nucleotide sequence ID" value="NC_003143.1"/>
</dbReference>
<dbReference type="SMR" id="Q8ZDF0"/>
<dbReference type="STRING" id="214092.YPO2618"/>
<dbReference type="PaxDb" id="214092-YPO2618"/>
<dbReference type="DNASU" id="1146140"/>
<dbReference type="EnsemblBacteria" id="AAS61341">
    <property type="protein sequence ID" value="AAS61341"/>
    <property type="gene ID" value="YP_1095"/>
</dbReference>
<dbReference type="GeneID" id="57976077"/>
<dbReference type="KEGG" id="ype:YPO2618"/>
<dbReference type="KEGG" id="ypk:y1193"/>
<dbReference type="KEGG" id="ypm:YP_1095"/>
<dbReference type="PATRIC" id="fig|214092.21.peg.3050"/>
<dbReference type="eggNOG" id="COG0319">
    <property type="taxonomic scope" value="Bacteria"/>
</dbReference>
<dbReference type="HOGENOM" id="CLU_106710_0_1_6"/>
<dbReference type="OMA" id="RMRIHPL"/>
<dbReference type="OrthoDB" id="9807740at2"/>
<dbReference type="Proteomes" id="UP000000815">
    <property type="component" value="Chromosome"/>
</dbReference>
<dbReference type="Proteomes" id="UP000001019">
    <property type="component" value="Chromosome"/>
</dbReference>
<dbReference type="Proteomes" id="UP000002490">
    <property type="component" value="Chromosome"/>
</dbReference>
<dbReference type="GO" id="GO:0005737">
    <property type="term" value="C:cytoplasm"/>
    <property type="evidence" value="ECO:0007669"/>
    <property type="project" value="UniProtKB-SubCell"/>
</dbReference>
<dbReference type="GO" id="GO:0004222">
    <property type="term" value="F:metalloendopeptidase activity"/>
    <property type="evidence" value="ECO:0007669"/>
    <property type="project" value="InterPro"/>
</dbReference>
<dbReference type="GO" id="GO:0004521">
    <property type="term" value="F:RNA endonuclease activity"/>
    <property type="evidence" value="ECO:0007669"/>
    <property type="project" value="UniProtKB-UniRule"/>
</dbReference>
<dbReference type="GO" id="GO:0008270">
    <property type="term" value="F:zinc ion binding"/>
    <property type="evidence" value="ECO:0007669"/>
    <property type="project" value="UniProtKB-UniRule"/>
</dbReference>
<dbReference type="GO" id="GO:0006364">
    <property type="term" value="P:rRNA processing"/>
    <property type="evidence" value="ECO:0007669"/>
    <property type="project" value="UniProtKB-UniRule"/>
</dbReference>
<dbReference type="Gene3D" id="3.40.390.30">
    <property type="entry name" value="Metalloproteases ('zincins'), catalytic domain"/>
    <property type="match status" value="1"/>
</dbReference>
<dbReference type="HAMAP" id="MF_00009">
    <property type="entry name" value="Endoribonucl_YbeY"/>
    <property type="match status" value="1"/>
</dbReference>
<dbReference type="InterPro" id="IPR023091">
    <property type="entry name" value="MetalPrtase_cat_dom_sf_prd"/>
</dbReference>
<dbReference type="InterPro" id="IPR002036">
    <property type="entry name" value="YbeY"/>
</dbReference>
<dbReference type="InterPro" id="IPR020549">
    <property type="entry name" value="YbeY_CS"/>
</dbReference>
<dbReference type="NCBIfam" id="TIGR00043">
    <property type="entry name" value="rRNA maturation RNase YbeY"/>
    <property type="match status" value="1"/>
</dbReference>
<dbReference type="PANTHER" id="PTHR46986">
    <property type="entry name" value="ENDORIBONUCLEASE YBEY, CHLOROPLASTIC"/>
    <property type="match status" value="1"/>
</dbReference>
<dbReference type="PANTHER" id="PTHR46986:SF1">
    <property type="entry name" value="ENDORIBONUCLEASE YBEY, CHLOROPLASTIC"/>
    <property type="match status" value="1"/>
</dbReference>
<dbReference type="Pfam" id="PF02130">
    <property type="entry name" value="YbeY"/>
    <property type="match status" value="1"/>
</dbReference>
<dbReference type="SUPFAM" id="SSF55486">
    <property type="entry name" value="Metalloproteases ('zincins'), catalytic domain"/>
    <property type="match status" value="1"/>
</dbReference>
<dbReference type="PROSITE" id="PS01306">
    <property type="entry name" value="UPF0054"/>
    <property type="match status" value="1"/>
</dbReference>
<feature type="chain" id="PRO_0000102575" description="Endoribonuclease YbeY">
    <location>
        <begin position="1"/>
        <end position="157"/>
    </location>
</feature>
<feature type="binding site" evidence="1">
    <location>
        <position position="114"/>
    </location>
    <ligand>
        <name>Zn(2+)</name>
        <dbReference type="ChEBI" id="CHEBI:29105"/>
        <note>catalytic</note>
    </ligand>
</feature>
<feature type="binding site" evidence="1">
    <location>
        <position position="118"/>
    </location>
    <ligand>
        <name>Zn(2+)</name>
        <dbReference type="ChEBI" id="CHEBI:29105"/>
        <note>catalytic</note>
    </ligand>
</feature>
<feature type="binding site" evidence="1">
    <location>
        <position position="124"/>
    </location>
    <ligand>
        <name>Zn(2+)</name>
        <dbReference type="ChEBI" id="CHEBI:29105"/>
        <note>catalytic</note>
    </ligand>
</feature>
<proteinExistence type="inferred from homology"/>
<evidence type="ECO:0000255" key="1">
    <source>
        <dbReference type="HAMAP-Rule" id="MF_00009"/>
    </source>
</evidence>
<reference key="1">
    <citation type="journal article" date="2001" name="Nature">
        <title>Genome sequence of Yersinia pestis, the causative agent of plague.</title>
        <authorList>
            <person name="Parkhill J."/>
            <person name="Wren B.W."/>
            <person name="Thomson N.R."/>
            <person name="Titball R.W."/>
            <person name="Holden M.T.G."/>
            <person name="Prentice M.B."/>
            <person name="Sebaihia M."/>
            <person name="James K.D."/>
            <person name="Churcher C.M."/>
            <person name="Mungall K.L."/>
            <person name="Baker S."/>
            <person name="Basham D."/>
            <person name="Bentley S.D."/>
            <person name="Brooks K."/>
            <person name="Cerdeno-Tarraga A.-M."/>
            <person name="Chillingworth T."/>
            <person name="Cronin A."/>
            <person name="Davies R.M."/>
            <person name="Davis P."/>
            <person name="Dougan G."/>
            <person name="Feltwell T."/>
            <person name="Hamlin N."/>
            <person name="Holroyd S."/>
            <person name="Jagels K."/>
            <person name="Karlyshev A.V."/>
            <person name="Leather S."/>
            <person name="Moule S."/>
            <person name="Oyston P.C.F."/>
            <person name="Quail M.A."/>
            <person name="Rutherford K.M."/>
            <person name="Simmonds M."/>
            <person name="Skelton J."/>
            <person name="Stevens K."/>
            <person name="Whitehead S."/>
            <person name="Barrell B.G."/>
        </authorList>
    </citation>
    <scope>NUCLEOTIDE SEQUENCE [LARGE SCALE GENOMIC DNA]</scope>
    <source>
        <strain>CO-92 / Biovar Orientalis</strain>
    </source>
</reference>
<reference key="2">
    <citation type="journal article" date="2002" name="J. Bacteriol.">
        <title>Genome sequence of Yersinia pestis KIM.</title>
        <authorList>
            <person name="Deng W."/>
            <person name="Burland V."/>
            <person name="Plunkett G. III"/>
            <person name="Boutin A."/>
            <person name="Mayhew G.F."/>
            <person name="Liss P."/>
            <person name="Perna N.T."/>
            <person name="Rose D.J."/>
            <person name="Mau B."/>
            <person name="Zhou S."/>
            <person name="Schwartz D.C."/>
            <person name="Fetherston J.D."/>
            <person name="Lindler L.E."/>
            <person name="Brubaker R.R."/>
            <person name="Plano G.V."/>
            <person name="Straley S.C."/>
            <person name="McDonough K.A."/>
            <person name="Nilles M.L."/>
            <person name="Matson J.S."/>
            <person name="Blattner F.R."/>
            <person name="Perry R.D."/>
        </authorList>
    </citation>
    <scope>NUCLEOTIDE SEQUENCE [LARGE SCALE GENOMIC DNA]</scope>
    <source>
        <strain>KIM10+ / Biovar Mediaevalis</strain>
    </source>
</reference>
<reference key="3">
    <citation type="journal article" date="2004" name="DNA Res.">
        <title>Complete genome sequence of Yersinia pestis strain 91001, an isolate avirulent to humans.</title>
        <authorList>
            <person name="Song Y."/>
            <person name="Tong Z."/>
            <person name="Wang J."/>
            <person name="Wang L."/>
            <person name="Guo Z."/>
            <person name="Han Y."/>
            <person name="Zhang J."/>
            <person name="Pei D."/>
            <person name="Zhou D."/>
            <person name="Qin H."/>
            <person name="Pang X."/>
            <person name="Han Y."/>
            <person name="Zhai J."/>
            <person name="Li M."/>
            <person name="Cui B."/>
            <person name="Qi Z."/>
            <person name="Jin L."/>
            <person name="Dai R."/>
            <person name="Chen F."/>
            <person name="Li S."/>
            <person name="Ye C."/>
            <person name="Du Z."/>
            <person name="Lin W."/>
            <person name="Wang J."/>
            <person name="Yu J."/>
            <person name="Yang H."/>
            <person name="Wang J."/>
            <person name="Huang P."/>
            <person name="Yang R."/>
        </authorList>
    </citation>
    <scope>NUCLEOTIDE SEQUENCE [LARGE SCALE GENOMIC DNA]</scope>
    <source>
        <strain>91001 / Biovar Mediaevalis</strain>
    </source>
</reference>
<organism>
    <name type="scientific">Yersinia pestis</name>
    <dbReference type="NCBI Taxonomy" id="632"/>
    <lineage>
        <taxon>Bacteria</taxon>
        <taxon>Pseudomonadati</taxon>
        <taxon>Pseudomonadota</taxon>
        <taxon>Gammaproteobacteria</taxon>
        <taxon>Enterobacterales</taxon>
        <taxon>Yersiniaceae</taxon>
        <taxon>Yersinia</taxon>
    </lineage>
</organism>